<comment type="function">
    <text evidence="6 7 8 10 11 13 23">Involved in the biosynthesis of 12- and 14-membered ring macrolactone antibiotics such as methymycin and neomethymycin, and pikromycin and narbomycin, respectively. Component of the pikromycin PKS which catalyzes the biosynthesis of both precursors 10-deoxymethynolide (12-membered ring macrolactone) and narbonolide (14-membered ring macrolactone). Chain elongation through PikAI, PikAII and PikAIII followed by thioesterase catalyzed termination results in the production of 10-deoxymethynolide, while continued elongation through PikAIV, followed by thioesterase (TE) catalyzed cyclization results in the biosynthesis of the narbonolide. The thioesterase can use a series of diketide-N-acetylcysteamine (SNAC) thioesters, but has a strong preference for the 2-methyl-3-ketopentanoyl-SNAC over the stereoisomers of 2-methyl-3-hydroxyacyl-SNAC (PubMed:12379101, PubMed:12733905).</text>
</comment>
<comment type="catalytic activity">
    <reaction evidence="6 18 19 22">
        <text>5 (S)-methylmalonyl-CoA + malonyl-CoA + 5 NADPH + 11 H(+) = 10-deoxymethynolide + 6 CO2 + 5 NADP(+) + 6 CoA + 2 H2O</text>
        <dbReference type="Rhea" id="RHEA:43056"/>
        <dbReference type="ChEBI" id="CHEBI:15377"/>
        <dbReference type="ChEBI" id="CHEBI:15378"/>
        <dbReference type="ChEBI" id="CHEBI:16526"/>
        <dbReference type="ChEBI" id="CHEBI:29461"/>
        <dbReference type="ChEBI" id="CHEBI:57287"/>
        <dbReference type="ChEBI" id="CHEBI:57327"/>
        <dbReference type="ChEBI" id="CHEBI:57384"/>
        <dbReference type="ChEBI" id="CHEBI:57783"/>
        <dbReference type="ChEBI" id="CHEBI:58349"/>
        <dbReference type="EC" id="2.3.1.239"/>
    </reaction>
</comment>
<comment type="catalytic activity">
    <reaction evidence="6 18 19 22">
        <text>6 (S)-methylmalonyl-CoA + malonyl-CoA + 5 NADPH + 12 H(+) = narbonolide + 7 CO2 + 5 NADP(+) + 7 CoA + 2 H2O</text>
        <dbReference type="Rhea" id="RHEA:42844"/>
        <dbReference type="ChEBI" id="CHEBI:15377"/>
        <dbReference type="ChEBI" id="CHEBI:15378"/>
        <dbReference type="ChEBI" id="CHEBI:16526"/>
        <dbReference type="ChEBI" id="CHEBI:29650"/>
        <dbReference type="ChEBI" id="CHEBI:57287"/>
        <dbReference type="ChEBI" id="CHEBI:57327"/>
        <dbReference type="ChEBI" id="CHEBI:57384"/>
        <dbReference type="ChEBI" id="CHEBI:57783"/>
        <dbReference type="ChEBI" id="CHEBI:58349"/>
        <dbReference type="EC" id="2.3.1.240"/>
    </reaction>
</comment>
<comment type="cofactor">
    <cofactor evidence="22">
        <name>pantetheine 4'-phosphate</name>
        <dbReference type="ChEBI" id="CHEBI:47942"/>
    </cofactor>
    <text evidence="17">Binds 1 phosphopantetheine covalently.</text>
</comment>
<comment type="activity regulation">
    <text evidence="12">Irreversibly inhibited by (2S,3R,4S)-2,4-dihydroxy-3-methylhexyl-phosphonic acid and (3R,4S)-4-hydroxy-3-methyl-2-oxohexyl-phosphonic acid.</text>
</comment>
<comment type="biophysicochemical properties">
    <kinetics>
        <KM evidence="8">7.3 mM for (2R,3S)-2-methyl-3-hydroxyacyl-SNAC (thioesterase activity)</KM>
        <KM evidence="8">13 mM for (2S,3S)-2-methyl-3-hydroxyacyl-SNAC (thioesterase activity)</KM>
        <KM evidence="8">15 mM for 2-methyl-3-ketopentanoyl-SNAC (thioesterase activity)</KM>
        <KM evidence="8">16 mM for (2R,3R)-2-methyl-3-hydroxyacyl-SNAC (thioesterase activity)</KM>
        <KM evidence="8">21 mM for (2S,3R)-2-methyl-3-hydroxyacyl-SNAC (thioesterase activity)</KM>
        <text evidence="8">kcat is 56 min(-1) for thioesterase activity with 2-methyl-3-ketopentanoyl-SNAC as substrate. kcat is 7.9 min(-1) for thioesterase activity with (2S,3R)-2-methyl-3-hydroxyacyl-SNAC as substrate. kcat is 4.3 min(-1) for thioesterase activity with (2R,3S)-2-methyl-3-hydroxyacyl-SNAC as substrate. kcat is 2.6 min(-1) for thioesterase activity with (2S,3S)-2-methyl-3-hydroxyacyl-SNAC as substrate. kcat is 1.8 min(-1) for thioesterase activity with (2R,3R)-2-methyl-3-hydroxyacyl-SNAC as substrate.</text>
    </kinetics>
    <phDependence>
        <text evidence="8 9">Optimum pH is between 8 and 8.4 (PubMed:12379101). In the thioesterase domain, the size of the substrate channel increases with increasing pH (PubMed:12379102).</text>
    </phDependence>
</comment>
<comment type="pathway">
    <text evidence="23 24">Antibiotic biosynthesis.</text>
</comment>
<comment type="subunit">
    <text evidence="9 11 12 14 23">Homodimer (PubMed:12379102, PubMed:16969372, PubMed:16969373, PubMed:19146481). Pikromycin PKS consists of a combination of multimodular (PikAI and PikAII) and monomodular (PikAIII and PikAIV) polypeptides each coding for a functional synthase subunit which participates in 1 (monomodular) or 2 (multimodular) of the six FAS-like elongation steps required for formation of the polyketide. Module 1, 2, 3, 4, 5, and 6 participating in biosynthesis steps 1, 2, 3, 4, 5, and 6, respectively.</text>
</comment>
<comment type="domain">
    <text evidence="7">Cells lacking the TE domain are unable to produce methymycin, neomethymycin, narbomycin and pikromycin.</text>
</comment>
<comment type="miscellaneous">
    <text evidence="23">Type I modular polyketide synthases (PKSs) catalyze the step-wise condensation of simple carboxylic acid derivatives. Organizationally, type I PKSs are arranged into modules, wherein each module is comprised of a set of catalytic activities that is responsible for a single elongation of the polyketide chain and the appropriate reductive processing of the beta-keto functionality. A minimal elongation module contains an acyl transferase (AT) domain, an acyl-carrier protein (ACP) domain, and a ketosynthase (KS) domain. The AT domain is responsible for loading the methylmalonyl-CoA extender unit onto the phosphopantetheinylated ACP domain. Subsequently, the KS domain decarboxylates and then condenses the ACP-bound extender unit with the growing polyketide chain obtained from the preceding module to yield an ACP-bound beta-ketoacyl intermediate. In addition to the three core domains, each elongation module may contain up to three additional domains: a ketoreductase (KR), dehydratase (DH), and an enoyl reductase (ER) that are responsible for the reductive processing of the beta-keto functionality prior to the next extension step. The presence of a KR domain alone gives rise to a beta-hydroxyl functionality, the presence of both a KR and a DH domain generates an alkene, while the combination of KR, DH, and ER results in complete reduction to the alkane. Finally, a thioesterase (TE) domain, typically found at the terminus of the last elongation module, catalyzes the termination of polyketide biosynthesis. The activity of this domain results in cleavage of the acyl chain from the adjacent ACP and formation of the macrocyclic ring.</text>
</comment>
<sequence>MTSSNEQLVDALRASLKENEELRKESRRRADRRQEPMAIVGMSCRFAGGIRSPEDLWDAVAAGKDLVSEVPEERGWDIDSLYDPVPGRKGTTYVRNAAFLDDAAGFDAAFFGISPREALAMDPQQRQLLEASWEVFERAGIDPASVRGTDVGVYVGCGYQDYAPDIRVAPEGTGGYVVTGNSSAVASGRIAYSLGLEGPAVTVDTACSSSLVALHLALKGLRNGDCSTALVGGVAVLATPGAFIEFSSQQAMAADGRTKGFASAADGLAWGEGVAVLLLERLSDARRKGHRVLAVVRGSAINQDGASNGLTAPHGPSQQHLIRQALADARLTSSDVDVVEGHGTGTRLGDPIEAQALLATYGQGRAPGQPLRLGTLKSNIGHTQAASGVAGVIKMVQALRHGVLPKTLHVDEPTDQVDWSAGSVELLTEAVDWPERPGRLRRAGVSAFGVGGTNAHVVLEEAPAVEESPAVEPPAGGGVVPWPVSAKTSAALDAQIGQLAAYAEDRTDVDPAVAARALVDSRTAMEHRAVAVGDSREALRDALRMPEGLVRGTVTDPGRVAFVFPGQGTQWAGMGAELLDSSPEFAAAMAECETALSPYVDWSLEAVVRQAPSAPTLDRVDVVQPVTFAVMVSLAKVWQHHGITPEAVIGHSQGEIAAAYVAGALTLDDAARVVTLRSKSIAAHLAGKGGMISLALSEEATRQRIENLHGLSIAAVNGPTATVVSGDPTQIQELAQACEADGIRARIIPVDYASHSAHVETIENELADVLAGLSPQTPQVPFFSTLEGTWITEPALDGGYWYRNLRHRVGFAPAVETLATDEGFTHFIEVSAHPVLTMTLPDKVTGLATLRREDGGQHRLTTSLAEAWANGLALDWASLLPATGALSPAVPDLPTYAFQHRSYWISPAGPGEAPAHTASGREAVAETGLAWGPGAEDLDEEGRRSAVLAMVMRQAASVLRCDSPEEVPVDRPLREIGFDSLTAVDFRNRVNRLTGLQLPPTVVFQHPTPVALAERISDELAERNWAVAEPSDHEQAEEEKAAAPAGARSGADTGAGAGMFRALFRQAVEDDRYGEFLDVLAEASAFRPQFASPEACSERLDPVLLAGGPTDRAEGRAVLVGCTGTAANGGPHEFLRLSTSFQEERDFLAVPLPGYGTGTGTGTALLPADLDTALDAQARAILRAAGDAPVVLLGHSGGALLAHELAFRLERAHGAPPAGIVLVDPYPPGHQEPIEVWSRQLGEGLFAGELEPMSDARLLAMGRYARFLAGPRPGRSSAPVLLVRASEPLGDWQEERGDWRAHWDLPHTVADVPGDHFTMMRDHAPAVAEAVLSWLDAIEGIEGAGK</sequence>
<reference key="1">
    <citation type="journal article" date="1998" name="Proc. Natl. Acad. Sci. U.S.A.">
        <title>A gene cluster for macrolide antibiotic biosynthesis in Streptomyces venezuelae: architecture of metabolic diversity.</title>
        <authorList>
            <person name="Xue Y."/>
            <person name="Zhao L."/>
            <person name="Liu H.W."/>
            <person name="Sherman D.H."/>
        </authorList>
    </citation>
    <scope>NUCLEOTIDE SEQUENCE [GENOMIC DNA]</scope>
    <scope>PATHWAY</scope>
    <source>
        <strain>ATCC 15439 / DSM 41110 / IMRU3627 / M-2140</strain>
    </source>
</reference>
<reference key="2">
    <citation type="journal article" date="1999" name="Chem. Biol.">
        <title>Elucidating the mechanism of chain termination switching in the picromycin/methymycin polyketide synthase.</title>
        <authorList>
            <person name="Tang L."/>
            <person name="Fu H."/>
            <person name="Betlach M.C."/>
            <person name="McDaniel R."/>
        </authorList>
    </citation>
    <scope>FUNCTION</scope>
    <scope>CATALYTIC ACTIVITY</scope>
</reference>
<reference key="3">
    <citation type="journal article" date="2000" name="Nature">
        <title>Alternative modular polyketide synthase expression controls macrolactone structure.</title>
        <authorList>
            <person name="Xue Y."/>
            <person name="Sherman D.H."/>
        </authorList>
    </citation>
    <scope>FUNCTION</scope>
    <scope>DOMAIN</scope>
    <source>
        <strain>ATCC 15439 / DSM 41110 / IMRU3627 / M-2140</strain>
    </source>
</reference>
<reference key="4">
    <citation type="journal article" date="2002" name="Biochemistry">
        <title>Expression, site-directed mutagenesis, and steady state kinetic analysis of the terminal thioesterase domain of the methymycin/picromycin polyketide synthase.</title>
        <authorList>
            <person name="Lu H."/>
            <person name="Tsai S.C."/>
            <person name="Khosla C."/>
            <person name="Cane D.E."/>
        </authorList>
    </citation>
    <scope>FUNCTION</scope>
    <scope>CATALYTIC ACTIVITY</scope>
    <scope>BIOPHYSICOCHEMICAL PROPERTIES</scope>
    <scope>MUTAGENESIS OF SER-1196; ASP-1224; GLU-1235 AND ARG-1239</scope>
    <scope>SUBSTRATE SPECIFICITY</scope>
</reference>
<reference key="5">
    <citation type="journal article" date="2003" name="J. Am. Chem. Soc.">
        <title>Expression and kinetic analysis of the substrate specificity of modules 5 and 6 of the picromycin/methymycin polyketide synthase.</title>
        <authorList>
            <person name="Yin Y."/>
            <person name="Lu H."/>
            <person name="Khosla C."/>
            <person name="Cane D.E."/>
        </authorList>
    </citation>
    <scope>FUNCTION</scope>
    <scope>CATALYTIC ACTIVITY</scope>
    <scope>SUBSTRATE SPECIFICITY</scope>
</reference>
<reference key="6">
    <citation type="journal article" date="2007" name="Chem. Biol.">
        <title>Interrogating the molecular basis for multiple macrolactone ring formation by the pikromycin polyketide synthase.</title>
        <authorList>
            <person name="Kittendorf J.D."/>
            <person name="Beck B.J."/>
            <person name="Buchholz T.J."/>
            <person name="Seufert W."/>
            <person name="Sherman D.H."/>
        </authorList>
    </citation>
    <scope>FUNCTION</scope>
    <scope>CATALYTIC ACTIVITY</scope>
    <scope>MUTAGENESIS OF CYS-207; SER-652; SER-980 AND SER-1196</scope>
    <scope>COFACTOR</scope>
    <scope>ACTIVE SITE</scope>
    <scope>PHOSPHOPANTETHEINYLATION AT SER-980</scope>
</reference>
<reference key="7">
    <citation type="journal article" date="2009" name="Bioorg. Med. Chem.">
        <title>The methymycin/pikromycin pathway: a model for metabolic diversity in natural product biosynthesis.</title>
        <authorList>
            <person name="Kittendorf J.D."/>
            <person name="Sherman D.H."/>
        </authorList>
    </citation>
    <scope>FUNCTION</scope>
    <scope>PATHWAY</scope>
    <scope>SUBUNIT</scope>
</reference>
<reference key="8">
    <citation type="journal article" date="2002" name="Biochemistry">
        <title>Insights into channel architecture and substrate specificity from crystal structures of two macrocycle-forming thioesterases of modular polyketide synthases.</title>
        <authorList>
            <person name="Tsai S.-C."/>
            <person name="Lu H."/>
            <person name="Cane D.E."/>
            <person name="Khosla C."/>
            <person name="Stroud R.M."/>
        </authorList>
    </citation>
    <scope>X-RAY CRYSTALLOGRAPHY (1.80 ANGSTROMS) OF 1049-1346</scope>
    <scope>BIOPHYSICOCHEMICAL PROPERTIES</scope>
    <scope>SUBUNIT</scope>
</reference>
<reference key="9">
    <citation type="journal article" date="2006" name="Nat. Chem. Biol.">
        <title>Structural and mechanistic insights into polyketide macrolactonization from polyketide-based affinity labels.</title>
        <authorList>
            <person name="Giraldes J.W."/>
            <person name="Akey D.L."/>
            <person name="Kittendorf J.D."/>
            <person name="Sherman D.H."/>
            <person name="Smith J.L."/>
            <person name="Fecik R.A."/>
        </authorList>
    </citation>
    <scope>X-RAY CRYSTALLOGRAPHY (1.85 ANGSTROMS) OF 1049-1346 IN COMPLEX WITH SUBSTRATE ANALOGS</scope>
    <scope>ACTIVITY REGULATION</scope>
    <scope>ACTIVE SITE</scope>
    <scope>SUBUNIT</scope>
</reference>
<reference key="10">
    <citation type="journal article" date="2006" name="Nat. Chem. Biol.">
        <title>Structural basis for macrolactonization by the pikromycin thioesterase.</title>
        <authorList>
            <person name="Akey D.L."/>
            <person name="Kittendorf J.D."/>
            <person name="Giraldes J.W."/>
            <person name="Fecik R.A."/>
            <person name="Sherman D.H."/>
            <person name="Smith J.L."/>
        </authorList>
    </citation>
    <scope>X-RAY CRYSTALLOGRAPHY (1.79 ANGSTROMS) OF 1049-1346 OF WILD-TYPE AND MUTANT ALA-1196 IN COMPLEX WITH SUBSTRATE ANALOGS</scope>
    <scope>FUNCTION</scope>
    <scope>MUTAGENESIS OF SER-1196</scope>
    <scope>REACTION MECHANISM</scope>
    <scope>ACTIVE SITE</scope>
    <scope>SUBUNIT</scope>
</reference>
<reference key="11">
    <citation type="journal article" date="2009" name="ACS Chem. Biol.">
        <title>Structural basis for binding specificity between subclasses of modular polyketide synthase docking domains.</title>
        <authorList>
            <person name="Buchholz T.J."/>
            <person name="Geders T.W."/>
            <person name="Bartley F.E."/>
            <person name="Reynolds K.A."/>
            <person name="Smith J.L."/>
            <person name="Sherman D.H."/>
        </authorList>
    </citation>
    <scope>X-RAY CRYSTALLOGRAPHY (1.75 ANGSTROMS) OF 1-37</scope>
    <scope>SUBUNIT</scope>
</reference>
<dbReference type="EC" id="2.3.1.239" evidence="6 18 19 22"/>
<dbReference type="EC" id="2.3.1.240" evidence="6 18 19 22"/>
<dbReference type="EMBL" id="AF079138">
    <property type="protein sequence ID" value="AAC69332.1"/>
    <property type="molecule type" value="Genomic_DNA"/>
</dbReference>
<dbReference type="PIR" id="T17412">
    <property type="entry name" value="T17412"/>
</dbReference>
<dbReference type="PDB" id="1MN6">
    <property type="method" value="X-ray"/>
    <property type="resolution" value="2.20 A"/>
    <property type="chains" value="A/B=1049-1346"/>
</dbReference>
<dbReference type="PDB" id="1MNA">
    <property type="method" value="X-ray"/>
    <property type="resolution" value="1.80 A"/>
    <property type="chains" value="A/B=1049-1346"/>
</dbReference>
<dbReference type="PDB" id="1MNQ">
    <property type="method" value="X-ray"/>
    <property type="resolution" value="2.20 A"/>
    <property type="chains" value="A/B=1049-1346"/>
</dbReference>
<dbReference type="PDB" id="2H7X">
    <property type="method" value="X-ray"/>
    <property type="resolution" value="1.85 A"/>
    <property type="chains" value="A/B=1049-1346"/>
</dbReference>
<dbReference type="PDB" id="2H7Y">
    <property type="method" value="X-ray"/>
    <property type="resolution" value="2.10 A"/>
    <property type="chains" value="A/B=1049-1346"/>
</dbReference>
<dbReference type="PDB" id="2HFJ">
    <property type="method" value="X-ray"/>
    <property type="resolution" value="1.95 A"/>
    <property type="chains" value="A/B=1049-1346"/>
</dbReference>
<dbReference type="PDB" id="2HFK">
    <property type="method" value="X-ray"/>
    <property type="resolution" value="1.79 A"/>
    <property type="chains" value="A/B=1049-1346"/>
</dbReference>
<dbReference type="PDB" id="3F5H">
    <property type="method" value="X-ray"/>
    <property type="resolution" value="1.75 A"/>
    <property type="chains" value="A/B=1-37"/>
</dbReference>
<dbReference type="PDB" id="9CBD">
    <property type="method" value="X-ray"/>
    <property type="resolution" value="2.00 A"/>
    <property type="chains" value="A/B=1057-1346"/>
</dbReference>
<dbReference type="PDB" id="9CGL">
    <property type="method" value="X-ray"/>
    <property type="resolution" value="3.10 A"/>
    <property type="chains" value="A/B=1057-1346"/>
</dbReference>
<dbReference type="PDB" id="9CGN">
    <property type="method" value="X-ray"/>
    <property type="resolution" value="2.80 A"/>
    <property type="chains" value="A/B=1057-1339"/>
</dbReference>
<dbReference type="PDBsum" id="1MN6"/>
<dbReference type="PDBsum" id="1MNA"/>
<dbReference type="PDBsum" id="1MNQ"/>
<dbReference type="PDBsum" id="2H7X"/>
<dbReference type="PDBsum" id="2H7Y"/>
<dbReference type="PDBsum" id="2HFJ"/>
<dbReference type="PDBsum" id="2HFK"/>
<dbReference type="PDBsum" id="3F5H"/>
<dbReference type="PDBsum" id="9CBD"/>
<dbReference type="PDBsum" id="9CGL"/>
<dbReference type="PDBsum" id="9CGN"/>
<dbReference type="SMR" id="Q9ZGI2"/>
<dbReference type="DrugBank" id="DB07703">
    <property type="generic name" value="(3R,4S,5S,7R,9E,11R,12R)-12-ETHYL-4-HYDROXY-3,5,7,11-TETRAMETHYLOXACYCLODODEC-9-ENE-2,8-DIONE"/>
</dbReference>
<dbReference type="DrugBank" id="DB08431">
    <property type="generic name" value="[(3R,4S)-4-HYDROXY-3-METHYL-2-OXOHEXYL]PHOSPHONIC ACID"/>
</dbReference>
<dbReference type="DrugBank" id="DB08759">
    <property type="generic name" value="[(3R,4S,5S,7R)-4,8-DIHYDROXY-3,5,7-TRIMETHYL-2-OXOOCTYL]PHOSPHONIC ACID"/>
</dbReference>
<dbReference type="ESTHER" id="strve-PIKAIV">
    <property type="family name" value="Thioesterase"/>
</dbReference>
<dbReference type="KEGG" id="ag:AAC69332"/>
<dbReference type="BioCyc" id="MetaCyc:MONOMER-18414"/>
<dbReference type="BRENDA" id="2.3.1.239">
    <property type="organism ID" value="6106"/>
</dbReference>
<dbReference type="BRENDA" id="2.3.1.240">
    <property type="organism ID" value="6106"/>
</dbReference>
<dbReference type="EvolutionaryTrace" id="Q9ZGI2"/>
<dbReference type="GO" id="GO:0004315">
    <property type="term" value="F:3-oxoacyl-[acyl-carrier-protein] synthase activity"/>
    <property type="evidence" value="ECO:0007669"/>
    <property type="project" value="InterPro"/>
</dbReference>
<dbReference type="GO" id="GO:0016747">
    <property type="term" value="F:acyltransferase activity, transferring groups other than amino-acyl groups"/>
    <property type="evidence" value="ECO:0000314"/>
    <property type="project" value="UniProtKB"/>
</dbReference>
<dbReference type="GO" id="GO:0004312">
    <property type="term" value="F:fatty acid synthase activity"/>
    <property type="evidence" value="ECO:0007669"/>
    <property type="project" value="TreeGrafter"/>
</dbReference>
<dbReference type="GO" id="GO:0031177">
    <property type="term" value="F:phosphopantetheine binding"/>
    <property type="evidence" value="ECO:0000304"/>
    <property type="project" value="UniProtKB"/>
</dbReference>
<dbReference type="GO" id="GO:0006633">
    <property type="term" value="P:fatty acid biosynthetic process"/>
    <property type="evidence" value="ECO:0007669"/>
    <property type="project" value="InterPro"/>
</dbReference>
<dbReference type="GO" id="GO:0033068">
    <property type="term" value="P:macrolide biosynthetic process"/>
    <property type="evidence" value="ECO:0000314"/>
    <property type="project" value="UniProtKB"/>
</dbReference>
<dbReference type="CDD" id="cd00833">
    <property type="entry name" value="PKS"/>
    <property type="match status" value="1"/>
</dbReference>
<dbReference type="FunFam" id="3.40.47.10:FF:000019">
    <property type="entry name" value="Polyketide synthase type I"/>
    <property type="match status" value="1"/>
</dbReference>
<dbReference type="FunFam" id="3.40.366.10:FF:000002">
    <property type="entry name" value="Probable polyketide synthase 2"/>
    <property type="match status" value="1"/>
</dbReference>
<dbReference type="Gene3D" id="3.30.70.3290">
    <property type="match status" value="1"/>
</dbReference>
<dbReference type="Gene3D" id="3.40.47.10">
    <property type="match status" value="1"/>
</dbReference>
<dbReference type="Gene3D" id="1.10.1200.10">
    <property type="entry name" value="ACP-like"/>
    <property type="match status" value="1"/>
</dbReference>
<dbReference type="Gene3D" id="3.40.50.1820">
    <property type="entry name" value="alpha/beta hydrolase"/>
    <property type="match status" value="1"/>
</dbReference>
<dbReference type="Gene3D" id="3.40.366.10">
    <property type="entry name" value="Malonyl-Coenzyme A Acyl Carrier Protein, domain 2"/>
    <property type="match status" value="1"/>
</dbReference>
<dbReference type="InterPro" id="IPR029058">
    <property type="entry name" value="AB_hydrolase_fold"/>
</dbReference>
<dbReference type="InterPro" id="IPR001227">
    <property type="entry name" value="Ac_transferase_dom_sf"/>
</dbReference>
<dbReference type="InterPro" id="IPR036736">
    <property type="entry name" value="ACP-like_sf"/>
</dbReference>
<dbReference type="InterPro" id="IPR014043">
    <property type="entry name" value="Acyl_transferase_dom"/>
</dbReference>
<dbReference type="InterPro" id="IPR016035">
    <property type="entry name" value="Acyl_Trfase/lysoPLipase"/>
</dbReference>
<dbReference type="InterPro" id="IPR018201">
    <property type="entry name" value="Ketoacyl_synth_AS"/>
</dbReference>
<dbReference type="InterPro" id="IPR014031">
    <property type="entry name" value="Ketoacyl_synth_C"/>
</dbReference>
<dbReference type="InterPro" id="IPR014030">
    <property type="entry name" value="Ketoacyl_synth_N"/>
</dbReference>
<dbReference type="InterPro" id="IPR016036">
    <property type="entry name" value="Malonyl_transacylase_ACP-bd"/>
</dbReference>
<dbReference type="InterPro" id="IPR015083">
    <property type="entry name" value="NorB/c/GfsB-D-like_docking"/>
</dbReference>
<dbReference type="InterPro" id="IPR032821">
    <property type="entry name" value="PKS_assoc"/>
</dbReference>
<dbReference type="InterPro" id="IPR020841">
    <property type="entry name" value="PKS_Beta-ketoAc_synthase_dom"/>
</dbReference>
<dbReference type="InterPro" id="IPR050091">
    <property type="entry name" value="PKS_NRPS_Biosynth_Enz"/>
</dbReference>
<dbReference type="InterPro" id="IPR020806">
    <property type="entry name" value="PKS_PP-bd"/>
</dbReference>
<dbReference type="InterPro" id="IPR020802">
    <property type="entry name" value="PKS_thioesterase"/>
</dbReference>
<dbReference type="InterPro" id="IPR009081">
    <property type="entry name" value="PP-bd_ACP"/>
</dbReference>
<dbReference type="InterPro" id="IPR001031">
    <property type="entry name" value="Thioesterase"/>
</dbReference>
<dbReference type="InterPro" id="IPR016039">
    <property type="entry name" value="Thiolase-like"/>
</dbReference>
<dbReference type="PANTHER" id="PTHR43775">
    <property type="entry name" value="FATTY ACID SYNTHASE"/>
    <property type="match status" value="1"/>
</dbReference>
<dbReference type="PANTHER" id="PTHR43775:SF37">
    <property type="entry name" value="SI:DKEY-61P9.11"/>
    <property type="match status" value="1"/>
</dbReference>
<dbReference type="Pfam" id="PF00698">
    <property type="entry name" value="Acyl_transf_1"/>
    <property type="match status" value="1"/>
</dbReference>
<dbReference type="Pfam" id="PF08990">
    <property type="entry name" value="Docking"/>
    <property type="match status" value="1"/>
</dbReference>
<dbReference type="Pfam" id="PF16197">
    <property type="entry name" value="KAsynt_C_assoc"/>
    <property type="match status" value="1"/>
</dbReference>
<dbReference type="Pfam" id="PF00109">
    <property type="entry name" value="ketoacyl-synt"/>
    <property type="match status" value="1"/>
</dbReference>
<dbReference type="Pfam" id="PF02801">
    <property type="entry name" value="Ketoacyl-synt_C"/>
    <property type="match status" value="1"/>
</dbReference>
<dbReference type="Pfam" id="PF00550">
    <property type="entry name" value="PP-binding"/>
    <property type="match status" value="1"/>
</dbReference>
<dbReference type="Pfam" id="PF00975">
    <property type="entry name" value="Thioesterase"/>
    <property type="match status" value="1"/>
</dbReference>
<dbReference type="SMART" id="SM00827">
    <property type="entry name" value="PKS_AT"/>
    <property type="match status" value="1"/>
</dbReference>
<dbReference type="SMART" id="SM00825">
    <property type="entry name" value="PKS_KS"/>
    <property type="match status" value="1"/>
</dbReference>
<dbReference type="SMART" id="SM00823">
    <property type="entry name" value="PKS_PP"/>
    <property type="match status" value="1"/>
</dbReference>
<dbReference type="SMART" id="SM01294">
    <property type="entry name" value="PKS_PP_betabranch"/>
    <property type="match status" value="1"/>
</dbReference>
<dbReference type="SMART" id="SM00824">
    <property type="entry name" value="PKS_TE"/>
    <property type="match status" value="1"/>
</dbReference>
<dbReference type="SUPFAM" id="SSF47336">
    <property type="entry name" value="ACP-like"/>
    <property type="match status" value="1"/>
</dbReference>
<dbReference type="SUPFAM" id="SSF53474">
    <property type="entry name" value="alpha/beta-Hydrolases"/>
    <property type="match status" value="1"/>
</dbReference>
<dbReference type="SUPFAM" id="SSF52151">
    <property type="entry name" value="FabD/lysophospholipase-like"/>
    <property type="match status" value="1"/>
</dbReference>
<dbReference type="SUPFAM" id="SSF55048">
    <property type="entry name" value="Probable ACP-binding domain of malonyl-CoA ACP transacylase"/>
    <property type="match status" value="1"/>
</dbReference>
<dbReference type="SUPFAM" id="SSF53901">
    <property type="entry name" value="Thiolase-like"/>
    <property type="match status" value="1"/>
</dbReference>
<dbReference type="PROSITE" id="PS50075">
    <property type="entry name" value="CARRIER"/>
    <property type="match status" value="1"/>
</dbReference>
<dbReference type="PROSITE" id="PS00606">
    <property type="entry name" value="KS3_1"/>
    <property type="match status" value="1"/>
</dbReference>
<dbReference type="PROSITE" id="PS52004">
    <property type="entry name" value="KS3_2"/>
    <property type="match status" value="1"/>
</dbReference>
<keyword id="KW-0002">3D-structure</keyword>
<keyword id="KW-0012">Acyltransferase</keyword>
<keyword id="KW-0045">Antibiotic biosynthesis</keyword>
<keyword id="KW-0175">Coiled coil</keyword>
<keyword id="KW-0511">Multifunctional enzyme</keyword>
<keyword id="KW-0521">NADP</keyword>
<keyword id="KW-0596">Phosphopantetheine</keyword>
<keyword id="KW-0597">Phosphoprotein</keyword>
<keyword id="KW-0808">Transferase</keyword>
<feature type="chain" id="PRO_0000436360" description="Pikromycin polyketide synthase component PikAIV">
    <location>
        <begin position="1"/>
        <end position="1346"/>
    </location>
</feature>
<feature type="domain" description="Ketosynthase family 3 (KS3)" evidence="4">
    <location>
        <begin position="34"/>
        <end position="461"/>
    </location>
</feature>
<feature type="domain" description="Carrier" evidence="3">
    <location>
        <begin position="945"/>
        <end position="1020"/>
    </location>
</feature>
<feature type="region of interest" description="Module 6" evidence="17">
    <location>
        <begin position="37"/>
        <end position="1332"/>
    </location>
</feature>
<feature type="region of interest" description="Acyltransferase" evidence="17">
    <location>
        <begin position="562"/>
        <end position="844"/>
    </location>
</feature>
<feature type="region of interest" description="Disordered" evidence="5">
    <location>
        <begin position="1028"/>
        <end position="1050"/>
    </location>
</feature>
<feature type="region of interest" description="Thioesterase" evidence="17">
    <location>
        <begin position="1127"/>
        <end position="1332"/>
    </location>
</feature>
<feature type="coiled-coil region" evidence="2">
    <location>
        <begin position="3"/>
        <end position="32"/>
    </location>
</feature>
<feature type="compositionally biased region" description="Basic and acidic residues" evidence="5">
    <location>
        <begin position="1030"/>
        <end position="1041"/>
    </location>
</feature>
<feature type="active site" description="For beta-ketoacyl synthase activity" evidence="4">
    <location>
        <position position="207"/>
    </location>
</feature>
<feature type="active site" description="For beta-ketoacyl synthase activity" evidence="4">
    <location>
        <position position="342"/>
    </location>
</feature>
<feature type="active site" description="For beta-ketoacyl synthase activity" evidence="4">
    <location>
        <position position="382"/>
    </location>
</feature>
<feature type="active site" description="Acyl-ester intermediate; for acyltransferase activity" evidence="1 22">
    <location>
        <position position="652"/>
    </location>
</feature>
<feature type="active site" description="Nucleophile; for thioesterase activity" evidence="1 11 21">
    <location>
        <position position="1196"/>
    </location>
</feature>
<feature type="active site" description="Proton acceptor; for thioesterase activity" evidence="1 20 21">
    <location>
        <position position="1316"/>
    </location>
</feature>
<feature type="binding site" evidence="11">
    <location>
        <position position="1125"/>
    </location>
    <ligand>
        <name>substrate</name>
    </ligand>
</feature>
<feature type="binding site" evidence="11 12">
    <location>
        <position position="1197"/>
    </location>
    <ligand>
        <name>substrate</name>
    </ligand>
</feature>
<feature type="binding site" evidence="1">
    <location>
        <position position="1224"/>
    </location>
    <ligand>
        <name>substrate</name>
    </ligand>
</feature>
<feature type="modified residue" description="O-(pantetheine 4'-phosphoryl)serine" evidence="3 22">
    <location>
        <position position="980"/>
    </location>
</feature>
<feature type="mutagenesis site" description="Unable to catalyze the biosynthesis of the 14-membered ring macrolactone narbonolide, however it is able to produce the 12-membered ring macrolactone 10-deoxymethynolide." evidence="13">
    <original>C</original>
    <variation>A</variation>
    <location>
        <position position="207"/>
    </location>
</feature>
<feature type="mutagenesis site" description="Unable to catalyze the biosynthesis of the 14-membered ring macrolactone narbonolide, however it is able to produce the 12-membered ring macrolactone 10-deoxymethynolide." evidence="13">
    <original>S</original>
    <variation>A</variation>
    <location>
        <position position="652"/>
    </location>
</feature>
<feature type="mutagenesis site" description="Unable to catalyze the biosynthesis of the 14-membered ring macrolactone narbonolide, however it is able to produce the 12-membered ring macrolactone 10-deoxymethynolide." evidence="13">
    <original>S</original>
    <variation>A</variation>
    <location>
        <position position="980"/>
    </location>
</feature>
<feature type="mutagenesis site" description="Loss of thioesterase activity. Unable to catalyze the biosynthesis of the 14-membered ring macrolactone narbonolide and 12-membered ring macrolactone 10-deoxymethynolide. The 10-deoxymethynolide molecule is removed from the catalytic triad, does not reach the most hydrophobic region of the channel, disrupts the hydrophilic-barrier water network and is rotated with respect the phosphopentaketide." evidence="8 11 13">
    <original>S</original>
    <variation>A</variation>
    <location>
        <position position="1196"/>
    </location>
</feature>
<feature type="mutagenesis site" description="Retains significant albeit reduced thioesterase activity." evidence="8">
    <original>D</original>
    <variation>A</variation>
    <location>
        <position position="1224"/>
    </location>
</feature>
<feature type="mutagenesis site" description="Only relatively minor changes in the thioesterase activity. 10-fold reduction in the kcat/Km for ketoester; when associated with E-1239." evidence="8">
    <original>E</original>
    <variation>N</variation>
    <location>
        <position position="1235"/>
    </location>
</feature>
<feature type="mutagenesis site" description="10-fold reduction in the kcat/Km for ketoester; when associated with N-1235." evidence="8">
    <original>R</original>
    <variation>E</variation>
    <location>
        <position position="1239"/>
    </location>
</feature>
<feature type="mutagenesis site" description="3-fold decrease fo the catalytic efficiency and 3-fold increase of affinity." evidence="8">
    <original>R</original>
    <variation>N</variation>
    <location>
        <position position="1239"/>
    </location>
</feature>
<feature type="helix" evidence="27">
    <location>
        <begin position="1"/>
        <end position="32"/>
    </location>
</feature>
<feature type="helix" evidence="26">
    <location>
        <begin position="1059"/>
        <end position="1069"/>
    </location>
</feature>
<feature type="helix" evidence="26">
    <location>
        <begin position="1073"/>
        <end position="1084"/>
    </location>
</feature>
<feature type="strand" evidence="25">
    <location>
        <begin position="1089"/>
        <end position="1092"/>
    </location>
</feature>
<feature type="helix" evidence="26">
    <location>
        <begin position="1093"/>
        <end position="1095"/>
    </location>
</feature>
<feature type="strand" evidence="26">
    <location>
        <begin position="1103"/>
        <end position="1106"/>
    </location>
</feature>
<feature type="strand" evidence="26">
    <location>
        <begin position="1118"/>
        <end position="1122"/>
    </location>
</feature>
<feature type="turn" evidence="26">
    <location>
        <begin position="1131"/>
        <end position="1134"/>
    </location>
</feature>
<feature type="helix" evidence="26">
    <location>
        <begin position="1135"/>
        <end position="1139"/>
    </location>
</feature>
<feature type="turn" evidence="26">
    <location>
        <begin position="1140"/>
        <end position="1144"/>
    </location>
</feature>
<feature type="strand" evidence="26">
    <location>
        <begin position="1147"/>
        <end position="1150"/>
    </location>
</feature>
<feature type="strand" evidence="26">
    <location>
        <begin position="1166"/>
        <end position="1169"/>
    </location>
</feature>
<feature type="helix" evidence="26">
    <location>
        <begin position="1170"/>
        <end position="1185"/>
    </location>
</feature>
<feature type="strand" evidence="26">
    <location>
        <begin position="1190"/>
        <end position="1195"/>
    </location>
</feature>
<feature type="helix" evidence="26">
    <location>
        <begin position="1197"/>
        <end position="1213"/>
    </location>
</feature>
<feature type="strand" evidence="26">
    <location>
        <begin position="1218"/>
        <end position="1224"/>
    </location>
</feature>
<feature type="helix" evidence="26">
    <location>
        <begin position="1232"/>
        <end position="1236"/>
    </location>
</feature>
<feature type="helix" evidence="26">
    <location>
        <begin position="1238"/>
        <end position="1247"/>
    </location>
</feature>
<feature type="helix" evidence="26">
    <location>
        <begin position="1255"/>
        <end position="1269"/>
    </location>
</feature>
<feature type="strand" evidence="26">
    <location>
        <begin position="1280"/>
        <end position="1287"/>
    </location>
</feature>
<feature type="helix" evidence="26">
    <location>
        <begin position="1294"/>
        <end position="1296"/>
    </location>
</feature>
<feature type="strand" evidence="26">
    <location>
        <begin position="1307"/>
        <end position="1314"/>
    </location>
</feature>
<feature type="helix" evidence="26">
    <location>
        <begin position="1318"/>
        <end position="1321"/>
    </location>
</feature>
<feature type="helix" evidence="26">
    <location>
        <begin position="1324"/>
        <end position="1339"/>
    </location>
</feature>
<proteinExistence type="evidence at protein level"/>
<gene>
    <name evidence="16" type="primary">pikAIV</name>
</gene>
<protein>
    <recommendedName>
        <fullName evidence="15">Pikromycin polyketide synthase component PikAIV</fullName>
        <shortName evidence="15">Pikromycin PKS component PikAIV</shortName>
        <ecNumber evidence="6 18 19 22">2.3.1.239</ecNumber>
        <ecNumber evidence="6 18 19 22">2.3.1.240</ecNumber>
    </recommendedName>
    <alternativeName>
        <fullName evidence="17">Narbonolide/10-deoxymethynolide synthase PikA4, module 6</fullName>
    </alternativeName>
    <alternativeName>
        <fullName evidence="17">Narbonolide/10-deoxymethynolide synthase PikAIV</fullName>
    </alternativeName>
    <alternativeName>
        <fullName evidence="15">Type I modular polyketide synthase PikAIV</fullName>
        <shortName evidence="15">PKS</shortName>
    </alternativeName>
</protein>
<organism>
    <name type="scientific">Streptomyces venezuelae</name>
    <dbReference type="NCBI Taxonomy" id="54571"/>
    <lineage>
        <taxon>Bacteria</taxon>
        <taxon>Bacillati</taxon>
        <taxon>Actinomycetota</taxon>
        <taxon>Actinomycetes</taxon>
        <taxon>Kitasatosporales</taxon>
        <taxon>Streptomycetaceae</taxon>
        <taxon>Streptomyces</taxon>
    </lineage>
</organism>
<accession>Q9ZGI2</accession>
<evidence type="ECO:0000250" key="1">
    <source>
        <dbReference type="UniProtKB" id="Q03133"/>
    </source>
</evidence>
<evidence type="ECO:0000255" key="2"/>
<evidence type="ECO:0000255" key="3">
    <source>
        <dbReference type="PROSITE-ProRule" id="PRU00258"/>
    </source>
</evidence>
<evidence type="ECO:0000255" key="4">
    <source>
        <dbReference type="PROSITE-ProRule" id="PRU01348"/>
    </source>
</evidence>
<evidence type="ECO:0000256" key="5">
    <source>
        <dbReference type="SAM" id="MobiDB-lite"/>
    </source>
</evidence>
<evidence type="ECO:0000269" key="6">
    <source>
    </source>
</evidence>
<evidence type="ECO:0000269" key="7">
    <source>
    </source>
</evidence>
<evidence type="ECO:0000269" key="8">
    <source>
    </source>
</evidence>
<evidence type="ECO:0000269" key="9">
    <source>
    </source>
</evidence>
<evidence type="ECO:0000269" key="10">
    <source>
    </source>
</evidence>
<evidence type="ECO:0000269" key="11">
    <source>
    </source>
</evidence>
<evidence type="ECO:0000269" key="12">
    <source>
    </source>
</evidence>
<evidence type="ECO:0000269" key="13">
    <source>
    </source>
</evidence>
<evidence type="ECO:0000269" key="14">
    <source>
    </source>
</evidence>
<evidence type="ECO:0000303" key="15">
    <source>
    </source>
</evidence>
<evidence type="ECO:0000303" key="16">
    <source>
    </source>
</evidence>
<evidence type="ECO:0000305" key="17"/>
<evidence type="ECO:0000305" key="18">
    <source>
    </source>
</evidence>
<evidence type="ECO:0000305" key="19">
    <source>
    </source>
</evidence>
<evidence type="ECO:0000305" key="20">
    <source>
    </source>
</evidence>
<evidence type="ECO:0000305" key="21">
    <source>
    </source>
</evidence>
<evidence type="ECO:0000305" key="22">
    <source>
    </source>
</evidence>
<evidence type="ECO:0000305" key="23">
    <source>
    </source>
</evidence>
<evidence type="ECO:0000305" key="24">
    <source>
    </source>
</evidence>
<evidence type="ECO:0007829" key="25">
    <source>
        <dbReference type="PDB" id="1MNA"/>
    </source>
</evidence>
<evidence type="ECO:0007829" key="26">
    <source>
        <dbReference type="PDB" id="2HFK"/>
    </source>
</evidence>
<evidence type="ECO:0007829" key="27">
    <source>
        <dbReference type="PDB" id="3F5H"/>
    </source>
</evidence>
<name>PIKA4_STRVZ</name>